<sequence length="94" mass="11334">MVKLRLKRCGRKQRAIYRIVAIDVRSRREGRDLQKVGFYDPIKNQTYSNVPAILYFLEKGAQPTETVYDILRKTEFFKEFRISFDKKRKEKQES</sequence>
<dbReference type="EMBL" id="AY916449">
    <property type="protein sequence ID" value="AAW82484.1"/>
    <property type="molecule type" value="Genomic_DNA"/>
</dbReference>
<dbReference type="RefSeq" id="YP_358558.1">
    <property type="nucleotide sequence ID" value="NC_007499.1"/>
</dbReference>
<dbReference type="SMR" id="Q3BAR0"/>
<dbReference type="GeneID" id="3741657"/>
<dbReference type="GO" id="GO:0009507">
    <property type="term" value="C:chloroplast"/>
    <property type="evidence" value="ECO:0007669"/>
    <property type="project" value="UniProtKB-SubCell"/>
</dbReference>
<dbReference type="GO" id="GO:0005739">
    <property type="term" value="C:mitochondrion"/>
    <property type="evidence" value="ECO:0007669"/>
    <property type="project" value="GOC"/>
</dbReference>
<dbReference type="GO" id="GO:0015935">
    <property type="term" value="C:small ribosomal subunit"/>
    <property type="evidence" value="ECO:0007669"/>
    <property type="project" value="TreeGrafter"/>
</dbReference>
<dbReference type="GO" id="GO:0003735">
    <property type="term" value="F:structural constituent of ribosome"/>
    <property type="evidence" value="ECO:0007669"/>
    <property type="project" value="InterPro"/>
</dbReference>
<dbReference type="GO" id="GO:0032543">
    <property type="term" value="P:mitochondrial translation"/>
    <property type="evidence" value="ECO:0007669"/>
    <property type="project" value="TreeGrafter"/>
</dbReference>
<dbReference type="FunFam" id="3.30.1320.10:FF:000003">
    <property type="entry name" value="30S ribosomal protein S16, chloroplastic"/>
    <property type="match status" value="1"/>
</dbReference>
<dbReference type="Gene3D" id="3.30.1320.10">
    <property type="match status" value="1"/>
</dbReference>
<dbReference type="HAMAP" id="MF_00385">
    <property type="entry name" value="Ribosomal_bS16"/>
    <property type="match status" value="1"/>
</dbReference>
<dbReference type="InterPro" id="IPR000307">
    <property type="entry name" value="Ribosomal_bS16"/>
</dbReference>
<dbReference type="InterPro" id="IPR020592">
    <property type="entry name" value="Ribosomal_bS16_CS"/>
</dbReference>
<dbReference type="InterPro" id="IPR023803">
    <property type="entry name" value="Ribosomal_bS16_dom_sf"/>
</dbReference>
<dbReference type="NCBIfam" id="TIGR00002">
    <property type="entry name" value="S16"/>
    <property type="match status" value="1"/>
</dbReference>
<dbReference type="PANTHER" id="PTHR12919">
    <property type="entry name" value="30S RIBOSOMAL PROTEIN S16"/>
    <property type="match status" value="1"/>
</dbReference>
<dbReference type="PANTHER" id="PTHR12919:SF20">
    <property type="entry name" value="SMALL RIBOSOMAL SUBUNIT PROTEIN BS16M"/>
    <property type="match status" value="1"/>
</dbReference>
<dbReference type="Pfam" id="PF00886">
    <property type="entry name" value="Ribosomal_S16"/>
    <property type="match status" value="1"/>
</dbReference>
<dbReference type="SUPFAM" id="SSF54565">
    <property type="entry name" value="Ribosomal protein S16"/>
    <property type="match status" value="1"/>
</dbReference>
<dbReference type="PROSITE" id="PS00732">
    <property type="entry name" value="RIBOSOMAL_S16"/>
    <property type="match status" value="1"/>
</dbReference>
<gene>
    <name evidence="1" type="primary">rps16</name>
</gene>
<proteinExistence type="inferred from homology"/>
<reference key="1">
    <citation type="journal article" date="2006" name="Mol. Biol. Evol.">
        <title>The chloroplast genome of Phalaenopsis aphrodite (Orchidaceae): comparative analysis of evolutionary rate with that of grasses and its phylogenetic implications.</title>
        <authorList>
            <person name="Chang C.-C."/>
            <person name="Lin H.-C."/>
            <person name="Lin I.-P."/>
            <person name="Chow T.-Y."/>
            <person name="Chen H.-H."/>
            <person name="Chen W.-H."/>
            <person name="Cheng C.-H."/>
            <person name="Lin C.-Y."/>
            <person name="Liu S.-M."/>
            <person name="Chang C.-C."/>
            <person name="Chaw S.-M."/>
        </authorList>
    </citation>
    <scope>NUCLEOTIDE SEQUENCE [LARGE SCALE GENOMIC DNA]</scope>
    <source>
        <strain>cv. Taisugar TS-97</strain>
    </source>
</reference>
<geneLocation type="chloroplast"/>
<name>RR16_PHAAO</name>
<accession>Q3BAR0</accession>
<protein>
    <recommendedName>
        <fullName evidence="1">Small ribosomal subunit protein bS16c</fullName>
    </recommendedName>
    <alternativeName>
        <fullName evidence="2">30S ribosomal protein S16, chloroplastic</fullName>
    </alternativeName>
</protein>
<feature type="chain" id="PRO_0000276957" description="Small ribosomal subunit protein bS16c">
    <location>
        <begin position="1"/>
        <end position="94"/>
    </location>
</feature>
<comment type="subcellular location">
    <subcellularLocation>
        <location>Plastid</location>
        <location>Chloroplast</location>
    </subcellularLocation>
</comment>
<comment type="similarity">
    <text evidence="1">Belongs to the bacterial ribosomal protein bS16 family.</text>
</comment>
<organism>
    <name type="scientific">Phalaenopsis aphrodite subsp. formosana</name>
    <name type="common">Moth orchid</name>
    <dbReference type="NCBI Taxonomy" id="308872"/>
    <lineage>
        <taxon>Eukaryota</taxon>
        <taxon>Viridiplantae</taxon>
        <taxon>Streptophyta</taxon>
        <taxon>Embryophyta</taxon>
        <taxon>Tracheophyta</taxon>
        <taxon>Spermatophyta</taxon>
        <taxon>Magnoliopsida</taxon>
        <taxon>Liliopsida</taxon>
        <taxon>Asparagales</taxon>
        <taxon>Orchidaceae</taxon>
        <taxon>Epidendroideae</taxon>
        <taxon>Vandeae</taxon>
        <taxon>Aeridinae</taxon>
        <taxon>Phalaenopsis</taxon>
    </lineage>
</organism>
<evidence type="ECO:0000255" key="1">
    <source>
        <dbReference type="HAMAP-Rule" id="MF_00385"/>
    </source>
</evidence>
<evidence type="ECO:0000305" key="2"/>
<keyword id="KW-0150">Chloroplast</keyword>
<keyword id="KW-0934">Plastid</keyword>
<keyword id="KW-0687">Ribonucleoprotein</keyword>
<keyword id="KW-0689">Ribosomal protein</keyword>